<feature type="chain" id="PRO_0000316741" description="Putative phosphoenolpyruvate synthase regulatory protein">
    <location>
        <begin position="1"/>
        <end position="270"/>
    </location>
</feature>
<feature type="binding site" evidence="1">
    <location>
        <begin position="150"/>
        <end position="157"/>
    </location>
    <ligand>
        <name>ADP</name>
        <dbReference type="ChEBI" id="CHEBI:456216"/>
    </ligand>
</feature>
<dbReference type="EC" id="2.7.11.33" evidence="1"/>
<dbReference type="EC" id="2.7.4.28" evidence="1"/>
<dbReference type="EMBL" id="CP000503">
    <property type="protein sequence ID" value="ABM24601.1"/>
    <property type="molecule type" value="Genomic_DNA"/>
</dbReference>
<dbReference type="RefSeq" id="WP_011789098.1">
    <property type="nucleotide sequence ID" value="NC_008750.1"/>
</dbReference>
<dbReference type="SMR" id="A1RIV6"/>
<dbReference type="KEGG" id="shw:Sputw3181_1764"/>
<dbReference type="HOGENOM" id="CLU_046206_1_0_6"/>
<dbReference type="Proteomes" id="UP000002597">
    <property type="component" value="Chromosome"/>
</dbReference>
<dbReference type="GO" id="GO:0043531">
    <property type="term" value="F:ADP binding"/>
    <property type="evidence" value="ECO:0007669"/>
    <property type="project" value="UniProtKB-UniRule"/>
</dbReference>
<dbReference type="GO" id="GO:0005524">
    <property type="term" value="F:ATP binding"/>
    <property type="evidence" value="ECO:0007669"/>
    <property type="project" value="InterPro"/>
</dbReference>
<dbReference type="GO" id="GO:0016776">
    <property type="term" value="F:phosphotransferase activity, phosphate group as acceptor"/>
    <property type="evidence" value="ECO:0007669"/>
    <property type="project" value="UniProtKB-UniRule"/>
</dbReference>
<dbReference type="GO" id="GO:0004674">
    <property type="term" value="F:protein serine/threonine kinase activity"/>
    <property type="evidence" value="ECO:0007669"/>
    <property type="project" value="UniProtKB-UniRule"/>
</dbReference>
<dbReference type="HAMAP" id="MF_01062">
    <property type="entry name" value="PSRP"/>
    <property type="match status" value="1"/>
</dbReference>
<dbReference type="InterPro" id="IPR005177">
    <property type="entry name" value="Kinase-pyrophosphorylase"/>
</dbReference>
<dbReference type="InterPro" id="IPR026530">
    <property type="entry name" value="PSRP"/>
</dbReference>
<dbReference type="NCBIfam" id="NF003742">
    <property type="entry name" value="PRK05339.1"/>
    <property type="match status" value="1"/>
</dbReference>
<dbReference type="PANTHER" id="PTHR31756">
    <property type="entry name" value="PYRUVATE, PHOSPHATE DIKINASE REGULATORY PROTEIN 1, CHLOROPLASTIC"/>
    <property type="match status" value="1"/>
</dbReference>
<dbReference type="PANTHER" id="PTHR31756:SF3">
    <property type="entry name" value="PYRUVATE, PHOSPHATE DIKINASE REGULATORY PROTEIN 1, CHLOROPLASTIC"/>
    <property type="match status" value="1"/>
</dbReference>
<dbReference type="Pfam" id="PF03618">
    <property type="entry name" value="Kinase-PPPase"/>
    <property type="match status" value="1"/>
</dbReference>
<gene>
    <name type="ordered locus">Sputw3181_1764</name>
</gene>
<accession>A1RIV6</accession>
<reference key="1">
    <citation type="submission" date="2006-12" db="EMBL/GenBank/DDBJ databases">
        <title>Complete sequence of Shewanella sp. W3-18-1.</title>
        <authorList>
            <consortium name="US DOE Joint Genome Institute"/>
            <person name="Copeland A."/>
            <person name="Lucas S."/>
            <person name="Lapidus A."/>
            <person name="Barry K."/>
            <person name="Detter J.C."/>
            <person name="Glavina del Rio T."/>
            <person name="Hammon N."/>
            <person name="Israni S."/>
            <person name="Dalin E."/>
            <person name="Tice H."/>
            <person name="Pitluck S."/>
            <person name="Chain P."/>
            <person name="Malfatti S."/>
            <person name="Shin M."/>
            <person name="Vergez L."/>
            <person name="Schmutz J."/>
            <person name="Larimer F."/>
            <person name="Land M."/>
            <person name="Hauser L."/>
            <person name="Kyrpides N."/>
            <person name="Lykidis A."/>
            <person name="Tiedje J."/>
            <person name="Richardson P."/>
        </authorList>
    </citation>
    <scope>NUCLEOTIDE SEQUENCE [LARGE SCALE GENOMIC DNA]</scope>
    <source>
        <strain>W3-18-1</strain>
    </source>
</reference>
<name>PSRP_SHESW</name>
<proteinExistence type="inferred from homology"/>
<comment type="function">
    <text evidence="1">Bifunctional serine/threonine kinase and phosphorylase involved in the regulation of the phosphoenolpyruvate synthase (PEPS) by catalyzing its phosphorylation/dephosphorylation.</text>
</comment>
<comment type="catalytic activity">
    <reaction evidence="1">
        <text>[pyruvate, water dikinase] + ADP = [pyruvate, water dikinase]-phosphate + AMP + H(+)</text>
        <dbReference type="Rhea" id="RHEA:46020"/>
        <dbReference type="Rhea" id="RHEA-COMP:11425"/>
        <dbReference type="Rhea" id="RHEA-COMP:11426"/>
        <dbReference type="ChEBI" id="CHEBI:15378"/>
        <dbReference type="ChEBI" id="CHEBI:43176"/>
        <dbReference type="ChEBI" id="CHEBI:68546"/>
        <dbReference type="ChEBI" id="CHEBI:456215"/>
        <dbReference type="ChEBI" id="CHEBI:456216"/>
        <dbReference type="EC" id="2.7.11.33"/>
    </reaction>
</comment>
<comment type="catalytic activity">
    <reaction evidence="1">
        <text>[pyruvate, water dikinase]-phosphate + phosphate + H(+) = [pyruvate, water dikinase] + diphosphate</text>
        <dbReference type="Rhea" id="RHEA:48580"/>
        <dbReference type="Rhea" id="RHEA-COMP:11425"/>
        <dbReference type="Rhea" id="RHEA-COMP:11426"/>
        <dbReference type="ChEBI" id="CHEBI:15378"/>
        <dbReference type="ChEBI" id="CHEBI:33019"/>
        <dbReference type="ChEBI" id="CHEBI:43176"/>
        <dbReference type="ChEBI" id="CHEBI:43474"/>
        <dbReference type="ChEBI" id="CHEBI:68546"/>
        <dbReference type="EC" id="2.7.4.28"/>
    </reaction>
</comment>
<comment type="similarity">
    <text evidence="1">Belongs to the pyruvate, phosphate/water dikinase regulatory protein family. PSRP subfamily.</text>
</comment>
<keyword id="KW-0418">Kinase</keyword>
<keyword id="KW-0547">Nucleotide-binding</keyword>
<keyword id="KW-0723">Serine/threonine-protein kinase</keyword>
<keyword id="KW-0808">Transferase</keyword>
<evidence type="ECO:0000255" key="1">
    <source>
        <dbReference type="HAMAP-Rule" id="MF_01062"/>
    </source>
</evidence>
<protein>
    <recommendedName>
        <fullName evidence="1">Putative phosphoenolpyruvate synthase regulatory protein</fullName>
        <shortName evidence="1">PEP synthase regulatory protein</shortName>
        <shortName evidence="1">PSRP</shortName>
        <ecNumber evidence="1">2.7.11.33</ecNumber>
        <ecNumber evidence="1">2.7.4.28</ecNumber>
    </recommendedName>
    <alternativeName>
        <fullName evidence="1">Pyruvate, water dikinase regulatory protein</fullName>
    </alternativeName>
</protein>
<sequence>MAPKVFYISDGTAITAEVFGHAVLSQFPLEFESLTIPFVETLAKAEQVKRQINDCFITTGERPLVFHSIVKAEIRDIIYSSEGVDYDFLNTFVAPLEQHLGVSASPVVHRTHGKANHGYEARIDAINFAMDNDDGQTMKHMDQADLILLGVSRCGKTPSSLYLSMQFGIKAANYPFTEDDMDNLKLPEALKRNKKKLFGLTIDPVRLHEIRQSRMENSRYSSLKQCRLEVKEVEMMFKRERIPYIDTTNHSVEEIATKILDVTGLERHMF</sequence>
<organism>
    <name type="scientific">Shewanella sp. (strain W3-18-1)</name>
    <dbReference type="NCBI Taxonomy" id="351745"/>
    <lineage>
        <taxon>Bacteria</taxon>
        <taxon>Pseudomonadati</taxon>
        <taxon>Pseudomonadota</taxon>
        <taxon>Gammaproteobacteria</taxon>
        <taxon>Alteromonadales</taxon>
        <taxon>Shewanellaceae</taxon>
        <taxon>Shewanella</taxon>
    </lineage>
</organism>